<feature type="chain" id="PRO_1000016339" description="Histidine--tRNA ligase">
    <location>
        <begin position="1"/>
        <end position="430"/>
    </location>
</feature>
<organism>
    <name type="scientific">Chlamydia felis (strain Fe/C-56)</name>
    <name type="common">Chlamydophila felis</name>
    <dbReference type="NCBI Taxonomy" id="264202"/>
    <lineage>
        <taxon>Bacteria</taxon>
        <taxon>Pseudomonadati</taxon>
        <taxon>Chlamydiota</taxon>
        <taxon>Chlamydiia</taxon>
        <taxon>Chlamydiales</taxon>
        <taxon>Chlamydiaceae</taxon>
        <taxon>Chlamydia/Chlamydophila group</taxon>
        <taxon>Chlamydia</taxon>
    </lineage>
</organism>
<sequence>MKVALPKGVFDIFPYITDAKHMWRHTSLWHRVEDVIHEVCDLYGFSEVRTPVFEKSEVFLHAGEQSDIVKKEMYTFLDKKGRSLTLRPEGTAPIVRSFIDNSMNQRDDNKFYYILPMFRYERQQSGRYRQHHQFGLEAIGVRHPLRDAEVLSLLWNFYSAVGLQGMQIQLNFLGGGTTRQRYDKVLREYFLEHFESLSSLSKERFNTNLLRILDSKETEDQEIIKSAPSILEYISDEDQKYFDEILTALNSLDIPHSINPKLVRGLDYYTDVVFEAITTFGGHSYALGGGGRYDGLVAASGGPSTPACGFGVGLERVMQTLLAQGNITLPSSHKLRLIPVESQADSFCFIWAQHLRGLGIPTEIDWTHKKLKNALKTADAEKATFVCLVGERELLSEQLTIKDMSSRQEFSGSKQEVEQRLLYEIQNTSL</sequence>
<evidence type="ECO:0000255" key="1">
    <source>
        <dbReference type="HAMAP-Rule" id="MF_00127"/>
    </source>
</evidence>
<gene>
    <name evidence="1" type="primary">hisS</name>
    <name type="ordered locus">CF0928</name>
</gene>
<name>SYH_CHLFF</name>
<proteinExistence type="inferred from homology"/>
<accession>Q252T8</accession>
<comment type="catalytic activity">
    <reaction evidence="1">
        <text>tRNA(His) + L-histidine + ATP = L-histidyl-tRNA(His) + AMP + diphosphate + H(+)</text>
        <dbReference type="Rhea" id="RHEA:17313"/>
        <dbReference type="Rhea" id="RHEA-COMP:9665"/>
        <dbReference type="Rhea" id="RHEA-COMP:9689"/>
        <dbReference type="ChEBI" id="CHEBI:15378"/>
        <dbReference type="ChEBI" id="CHEBI:30616"/>
        <dbReference type="ChEBI" id="CHEBI:33019"/>
        <dbReference type="ChEBI" id="CHEBI:57595"/>
        <dbReference type="ChEBI" id="CHEBI:78442"/>
        <dbReference type="ChEBI" id="CHEBI:78527"/>
        <dbReference type="ChEBI" id="CHEBI:456215"/>
        <dbReference type="EC" id="6.1.1.21"/>
    </reaction>
</comment>
<comment type="subunit">
    <text evidence="1">Homodimer.</text>
</comment>
<comment type="subcellular location">
    <subcellularLocation>
        <location evidence="1">Cytoplasm</location>
    </subcellularLocation>
</comment>
<comment type="similarity">
    <text evidence="1">Belongs to the class-II aminoacyl-tRNA synthetase family.</text>
</comment>
<keyword id="KW-0030">Aminoacyl-tRNA synthetase</keyword>
<keyword id="KW-0067">ATP-binding</keyword>
<keyword id="KW-0963">Cytoplasm</keyword>
<keyword id="KW-0436">Ligase</keyword>
<keyword id="KW-0547">Nucleotide-binding</keyword>
<keyword id="KW-0648">Protein biosynthesis</keyword>
<reference key="1">
    <citation type="journal article" date="2006" name="DNA Res.">
        <title>Genome sequence of the cat pathogen, Chlamydophila felis.</title>
        <authorList>
            <person name="Azuma Y."/>
            <person name="Hirakawa H."/>
            <person name="Yamashita A."/>
            <person name="Cai Y."/>
            <person name="Rahman M.A."/>
            <person name="Suzuki H."/>
            <person name="Mitaku S."/>
            <person name="Toh H."/>
            <person name="Goto S."/>
            <person name="Murakami T."/>
            <person name="Sugi K."/>
            <person name="Hayashi H."/>
            <person name="Fukushi H."/>
            <person name="Hattori M."/>
            <person name="Kuhara S."/>
            <person name="Shirai M."/>
        </authorList>
    </citation>
    <scope>NUCLEOTIDE SEQUENCE [LARGE SCALE GENOMIC DNA]</scope>
    <source>
        <strain>Fe/C-56</strain>
    </source>
</reference>
<dbReference type="EC" id="6.1.1.21" evidence="1"/>
<dbReference type="EMBL" id="AP006861">
    <property type="protein sequence ID" value="BAE81700.1"/>
    <property type="molecule type" value="Genomic_DNA"/>
</dbReference>
<dbReference type="RefSeq" id="WP_011458473.1">
    <property type="nucleotide sequence ID" value="NC_007899.1"/>
</dbReference>
<dbReference type="SMR" id="Q252T8"/>
<dbReference type="STRING" id="264202.CF0928"/>
<dbReference type="KEGG" id="cfe:CF0928"/>
<dbReference type="eggNOG" id="COG0124">
    <property type="taxonomic scope" value="Bacteria"/>
</dbReference>
<dbReference type="HOGENOM" id="CLU_025113_1_1_0"/>
<dbReference type="OrthoDB" id="9800814at2"/>
<dbReference type="Proteomes" id="UP000001260">
    <property type="component" value="Chromosome"/>
</dbReference>
<dbReference type="GO" id="GO:0005737">
    <property type="term" value="C:cytoplasm"/>
    <property type="evidence" value="ECO:0007669"/>
    <property type="project" value="UniProtKB-SubCell"/>
</dbReference>
<dbReference type="GO" id="GO:0005524">
    <property type="term" value="F:ATP binding"/>
    <property type="evidence" value="ECO:0007669"/>
    <property type="project" value="UniProtKB-UniRule"/>
</dbReference>
<dbReference type="GO" id="GO:0004821">
    <property type="term" value="F:histidine-tRNA ligase activity"/>
    <property type="evidence" value="ECO:0007669"/>
    <property type="project" value="UniProtKB-UniRule"/>
</dbReference>
<dbReference type="GO" id="GO:0006427">
    <property type="term" value="P:histidyl-tRNA aminoacylation"/>
    <property type="evidence" value="ECO:0007669"/>
    <property type="project" value="UniProtKB-UniRule"/>
</dbReference>
<dbReference type="CDD" id="cd00773">
    <property type="entry name" value="HisRS-like_core"/>
    <property type="match status" value="1"/>
</dbReference>
<dbReference type="FunFam" id="3.30.930.10:FF:000166">
    <property type="entry name" value="Histidine--tRNA ligase"/>
    <property type="match status" value="1"/>
</dbReference>
<dbReference type="Gene3D" id="3.40.50.800">
    <property type="entry name" value="Anticodon-binding domain"/>
    <property type="match status" value="1"/>
</dbReference>
<dbReference type="Gene3D" id="3.30.930.10">
    <property type="entry name" value="Bira Bifunctional Protein, Domain 2"/>
    <property type="match status" value="1"/>
</dbReference>
<dbReference type="HAMAP" id="MF_00127">
    <property type="entry name" value="His_tRNA_synth"/>
    <property type="match status" value="1"/>
</dbReference>
<dbReference type="InterPro" id="IPR006195">
    <property type="entry name" value="aa-tRNA-synth_II"/>
</dbReference>
<dbReference type="InterPro" id="IPR045864">
    <property type="entry name" value="aa-tRNA-synth_II/BPL/LPL"/>
</dbReference>
<dbReference type="InterPro" id="IPR004154">
    <property type="entry name" value="Anticodon-bd"/>
</dbReference>
<dbReference type="InterPro" id="IPR036621">
    <property type="entry name" value="Anticodon-bd_dom_sf"/>
</dbReference>
<dbReference type="InterPro" id="IPR015807">
    <property type="entry name" value="His-tRNA-ligase"/>
</dbReference>
<dbReference type="InterPro" id="IPR041715">
    <property type="entry name" value="HisRS-like_core"/>
</dbReference>
<dbReference type="InterPro" id="IPR004516">
    <property type="entry name" value="HisRS/HisZ"/>
</dbReference>
<dbReference type="NCBIfam" id="TIGR00442">
    <property type="entry name" value="hisS"/>
    <property type="match status" value="1"/>
</dbReference>
<dbReference type="PANTHER" id="PTHR43707:SF1">
    <property type="entry name" value="HISTIDINE--TRNA LIGASE, MITOCHONDRIAL-RELATED"/>
    <property type="match status" value="1"/>
</dbReference>
<dbReference type="PANTHER" id="PTHR43707">
    <property type="entry name" value="HISTIDYL-TRNA SYNTHETASE"/>
    <property type="match status" value="1"/>
</dbReference>
<dbReference type="Pfam" id="PF03129">
    <property type="entry name" value="HGTP_anticodon"/>
    <property type="match status" value="1"/>
</dbReference>
<dbReference type="Pfam" id="PF13393">
    <property type="entry name" value="tRNA-synt_His"/>
    <property type="match status" value="1"/>
</dbReference>
<dbReference type="PIRSF" id="PIRSF001549">
    <property type="entry name" value="His-tRNA_synth"/>
    <property type="match status" value="1"/>
</dbReference>
<dbReference type="SUPFAM" id="SSF52954">
    <property type="entry name" value="Class II aaRS ABD-related"/>
    <property type="match status" value="1"/>
</dbReference>
<dbReference type="SUPFAM" id="SSF55681">
    <property type="entry name" value="Class II aaRS and biotin synthetases"/>
    <property type="match status" value="1"/>
</dbReference>
<dbReference type="PROSITE" id="PS50862">
    <property type="entry name" value="AA_TRNA_LIGASE_II"/>
    <property type="match status" value="1"/>
</dbReference>
<protein>
    <recommendedName>
        <fullName evidence="1">Histidine--tRNA ligase</fullName>
        <ecNumber evidence="1">6.1.1.21</ecNumber>
    </recommendedName>
    <alternativeName>
        <fullName evidence="1">Histidyl-tRNA synthetase</fullName>
        <shortName evidence="1">HisRS</shortName>
    </alternativeName>
</protein>